<keyword id="KW-0072">Autophagy</keyword>
<keyword id="KW-0968">Cytoplasmic vesicle</keyword>
<keyword id="KW-0256">Endoplasmic reticulum</keyword>
<keyword id="KW-0333">Golgi apparatus</keyword>
<keyword id="KW-0445">Lipid transport</keyword>
<keyword id="KW-0472">Membrane</keyword>
<keyword id="KW-0597">Phosphoprotein</keyword>
<keyword id="KW-1185">Reference proteome</keyword>
<keyword id="KW-0812">Transmembrane</keyword>
<keyword id="KW-1133">Transmembrane helix</keyword>
<keyword id="KW-0813">Transport</keyword>
<protein>
    <recommendedName>
        <fullName>Autophagy-related protein 9</fullName>
    </recommendedName>
</protein>
<comment type="function">
    <text evidence="2">Phospholipid scramblase involved in autophagy and cytoplasm to vacuole transport (Cvt) vesicle formation. Cycles between the preautophagosomal structure/phagophore assembly site (PAS) and the cytoplasmic vesicle pool and supplies membrane for the growing autophagosome. Lipid scramblase activity plays a key role in preautophagosomal structure/phagophore assembly by distributing the phospholipids that arrive through atg2 from the cytoplasmic to the luminal leaflet of the bilayer, thereby driving autophagosomal membrane expansion. Required for mitophagy. Also involved in endoplasmic reticulum-specific autophagic process and is essential for the survival of cells subjected to severe ER stress. Different machineries are required for anterograde trafficking to the PAS during either the Cvt pathway or bulk autophagy and for retrograde trafficking.</text>
</comment>
<comment type="catalytic activity">
    <reaction evidence="2">
        <text>a 1,2-diacyl-sn-glycero-3-phosphocholine(in) = a 1,2-diacyl-sn-glycero-3-phosphocholine(out)</text>
        <dbReference type="Rhea" id="RHEA:38571"/>
        <dbReference type="ChEBI" id="CHEBI:57643"/>
    </reaction>
</comment>
<comment type="catalytic activity">
    <reaction evidence="2">
        <text>a 1,2-diacyl-sn-glycero-3-phospho-L-serine(in) = a 1,2-diacyl-sn-glycero-3-phospho-L-serine(out)</text>
        <dbReference type="Rhea" id="RHEA:38663"/>
        <dbReference type="ChEBI" id="CHEBI:57262"/>
    </reaction>
</comment>
<comment type="catalytic activity">
    <reaction evidence="2">
        <text>a 1,2-diacyl-sn-glycero-3-phosphoethanolamine(in) = a 1,2-diacyl-sn-glycero-3-phosphoethanolamine(out)</text>
        <dbReference type="Rhea" id="RHEA:38895"/>
        <dbReference type="ChEBI" id="CHEBI:64612"/>
    </reaction>
</comment>
<comment type="catalytic activity">
    <reaction evidence="2">
        <text>a 1,2-diacyl-sn-glycero-3-phospho-(1D-myo-inositol-3-phosphate)(in) = a 1,2-diacyl-sn-glycero-3-phospho-(1D-myo-inositol-3-phosphate)(out)</text>
        <dbReference type="Rhea" id="RHEA:67920"/>
        <dbReference type="ChEBI" id="CHEBI:58088"/>
    </reaction>
</comment>
<comment type="subunit">
    <text evidence="1">Homotrimer; forms a homotrimer with a central pore that forms a path between the two membrane leaflets.</text>
</comment>
<comment type="subcellular location">
    <subcellularLocation>
        <location evidence="2">Preautophagosomal structure membrane</location>
        <topology evidence="2">Multi-pass membrane protein</topology>
    </subcellularLocation>
    <subcellularLocation>
        <location evidence="2">Cytoplasmic vesicle membrane</location>
        <topology evidence="2">Multi-pass membrane protein</topology>
    </subcellularLocation>
    <subcellularLocation>
        <location evidence="2">Golgi apparatus membrane</location>
        <topology evidence="2">Multi-pass membrane protein</topology>
    </subcellularLocation>
    <subcellularLocation>
        <location evidence="2">Endoplasmic reticulum membrane</location>
        <topology evidence="2">Multi-pass membrane protein</topology>
    </subcellularLocation>
</comment>
<comment type="domain">
    <text evidence="1">Forms a homotrimer with a solvated central pore, which is connected laterally to the cytosol through the cavity within each protomer. Acts as a lipid scramblase that uses its central pore to function: the central pore opens laterally to accommodate lipid headgroups, thereby enabling lipid flipping and redistribution of lipids added to the outer leaflet of atg9-containing vesicles, thereby enabling growth into autophagosomes.</text>
</comment>
<comment type="PTM">
    <text evidence="2">Phosphorylated by atg1. Atg1 phosphorylation is required for preautophagosome elongation.</text>
</comment>
<comment type="similarity">
    <text evidence="5">Belongs to the ATG9 family.</text>
</comment>
<proteinExistence type="inferred from homology"/>
<feature type="chain" id="PRO_0000317906" description="Autophagy-related protein 9">
    <location>
        <begin position="1"/>
        <end position="949"/>
    </location>
</feature>
<feature type="topological domain" description="Cytoplasmic" evidence="5">
    <location>
        <begin position="1"/>
        <end position="232"/>
    </location>
</feature>
<feature type="transmembrane region" description="Helical" evidence="3">
    <location>
        <begin position="233"/>
        <end position="253"/>
    </location>
</feature>
<feature type="topological domain" description="Lumenal" evidence="5">
    <location>
        <begin position="254"/>
        <end position="289"/>
    </location>
</feature>
<feature type="transmembrane region" description="Helical" evidence="3">
    <location>
        <begin position="290"/>
        <end position="310"/>
    </location>
</feature>
<feature type="topological domain" description="Cytoplasmic" evidence="5">
    <location>
        <begin position="311"/>
        <end position="431"/>
    </location>
</feature>
<feature type="intramembrane region" evidence="1">
    <location>
        <begin position="432"/>
        <end position="477"/>
    </location>
</feature>
<feature type="topological domain" description="Cytoplasmic" evidence="5">
    <location>
        <begin position="478"/>
        <end position="542"/>
    </location>
</feature>
<feature type="transmembrane region" description="Helical" evidence="3">
    <location>
        <begin position="543"/>
        <end position="563"/>
    </location>
</feature>
<feature type="topological domain" description="Lumenal" evidence="5">
    <location>
        <begin position="564"/>
        <end position="578"/>
    </location>
</feature>
<feature type="transmembrane region" description="Helical" evidence="3">
    <location>
        <begin position="579"/>
        <end position="599"/>
    </location>
</feature>
<feature type="topological domain" description="Cytoplasmic" evidence="5">
    <location>
        <begin position="600"/>
        <end position="645"/>
    </location>
</feature>
<feature type="intramembrane region" evidence="1">
    <location>
        <begin position="646"/>
        <end position="666"/>
    </location>
</feature>
<feature type="topological domain" description="Cytoplasmic" evidence="5">
    <location>
        <begin position="667"/>
        <end position="949"/>
    </location>
</feature>
<feature type="region of interest" description="Disordered" evidence="4">
    <location>
        <begin position="1"/>
        <end position="197"/>
    </location>
</feature>
<feature type="region of interest" description="Disordered" evidence="4">
    <location>
        <begin position="748"/>
        <end position="919"/>
    </location>
</feature>
<feature type="compositionally biased region" description="Basic and acidic residues" evidence="4">
    <location>
        <begin position="35"/>
        <end position="57"/>
    </location>
</feature>
<feature type="compositionally biased region" description="Basic and acidic residues" evidence="4">
    <location>
        <begin position="75"/>
        <end position="85"/>
    </location>
</feature>
<feature type="compositionally biased region" description="Basic and acidic residues" evidence="4">
    <location>
        <begin position="129"/>
        <end position="139"/>
    </location>
</feature>
<evidence type="ECO:0000250" key="1">
    <source>
        <dbReference type="UniProtKB" id="O74312"/>
    </source>
</evidence>
<evidence type="ECO:0000250" key="2">
    <source>
        <dbReference type="UniProtKB" id="Q12142"/>
    </source>
</evidence>
<evidence type="ECO:0000255" key="3"/>
<evidence type="ECO:0000256" key="4">
    <source>
        <dbReference type="SAM" id="MobiDB-lite"/>
    </source>
</evidence>
<evidence type="ECO:0000305" key="5"/>
<gene>
    <name type="primary">atg9</name>
    <name type="ORF">ACLA_085600</name>
</gene>
<organism>
    <name type="scientific">Aspergillus clavatus (strain ATCC 1007 / CBS 513.65 / DSM 816 / NCTC 3887 / NRRL 1 / QM 1276 / 107)</name>
    <dbReference type="NCBI Taxonomy" id="344612"/>
    <lineage>
        <taxon>Eukaryota</taxon>
        <taxon>Fungi</taxon>
        <taxon>Dikarya</taxon>
        <taxon>Ascomycota</taxon>
        <taxon>Pezizomycotina</taxon>
        <taxon>Eurotiomycetes</taxon>
        <taxon>Eurotiomycetidae</taxon>
        <taxon>Eurotiales</taxon>
        <taxon>Aspergillaceae</taxon>
        <taxon>Aspergillus</taxon>
        <taxon>Aspergillus subgen. Fumigati</taxon>
    </lineage>
</organism>
<accession>A1CU77</accession>
<reference key="1">
    <citation type="journal article" date="2008" name="PLoS Genet.">
        <title>Genomic islands in the pathogenic filamentous fungus Aspergillus fumigatus.</title>
        <authorList>
            <person name="Fedorova N.D."/>
            <person name="Khaldi N."/>
            <person name="Joardar V.S."/>
            <person name="Maiti R."/>
            <person name="Amedeo P."/>
            <person name="Anderson M.J."/>
            <person name="Crabtree J."/>
            <person name="Silva J.C."/>
            <person name="Badger J.H."/>
            <person name="Albarraq A."/>
            <person name="Angiuoli S."/>
            <person name="Bussey H."/>
            <person name="Bowyer P."/>
            <person name="Cotty P.J."/>
            <person name="Dyer P.S."/>
            <person name="Egan A."/>
            <person name="Galens K."/>
            <person name="Fraser-Liggett C.M."/>
            <person name="Haas B.J."/>
            <person name="Inman J.M."/>
            <person name="Kent R."/>
            <person name="Lemieux S."/>
            <person name="Malavazi I."/>
            <person name="Orvis J."/>
            <person name="Roemer T."/>
            <person name="Ronning C.M."/>
            <person name="Sundaram J.P."/>
            <person name="Sutton G."/>
            <person name="Turner G."/>
            <person name="Venter J.C."/>
            <person name="White O.R."/>
            <person name="Whitty B.R."/>
            <person name="Youngman P."/>
            <person name="Wolfe K.H."/>
            <person name="Goldman G.H."/>
            <person name="Wortman J.R."/>
            <person name="Jiang B."/>
            <person name="Denning D.W."/>
            <person name="Nierman W.C."/>
        </authorList>
    </citation>
    <scope>NUCLEOTIDE SEQUENCE [LARGE SCALE GENOMIC DNA]</scope>
    <source>
        <strain>ATCC 1007 / CBS 513.65 / DSM 816 / NCTC 3887 / NRRL 1 / QM 1276 / 107</strain>
    </source>
</reference>
<sequence length="949" mass="106768">MMTSNILSRFLPPNNSPSVYEAIRQNDADSDSSDVEERAGLTLEDGHGGHYTDHELQDAMVDADQSELPSPDDAFLARESHHRVPSEGPSKSTSRRRKNSRPRWMQAASPGQDFEYGDDDDVPASLLVEGHHDDEDLKSRLPPPPRPLSPHEIQPSLPGPSSQGDQARWRAARDQQPLHNASRRRPPGVKWSLGQPNLNTVDPKEKAMWMWANVDNLDNFLKEVYSYFLGNGIWSILLTRVLSLLTFAFVVGFSTFLTNCVNYHKVRGSKTLDDILVDRCTTKMSLSSTFLLWLLTFFWIGKAFQCLLGIRRLKHMHDFYHYLLGVSDTDIQTISWQEVVSRLMTLRDANPATAGAVSARHRKFMGSQSKQRMDAHDIANRLMRKENYLIALVNKDILDLTLPIPFLRNRPLFSQTLEWNLNLCIMDYVFNEQGQVRTLFLKDTHRKALSEGLRRRFIFAGFMNIFVAPFIVVYFMMHYFFRYFNEYKKNPSQIGSRQYTPLAEWKFREFNELWHLFERRINMSYPFASRYVDQFPKDKTVQVAGFVAFVSGALASVLALASVVDPELFLGFEITHDRTVLFYLGVFGSVWAVARGMVPEETNVFDPEYALLEVINYTHYFPSQWKGRLHSDEVRREFAELYQMKIVIFLEEILSMIFTPFILWFSLPRCSDRLIDFFREFTVHVDGMGYLCSFAVFDFKKGTNVITQGDRREPARQDLRADYFATKDGKMLASYYGFLDNYGANPRGAHPSTKRQFHPPPAFPTLGSPSAMDLGHLGDRADPPQARPFAGQQSTFGPSRFGPTGLADHGSPAPSMLLDPHHQPSASGFRTAHRTAFSRYRSSRAAPPISGAILDDDESPSAPNRNGSARSAAGAPAPPGGSSGGGVGASDSNLEDSWRMNLTGDTDDEDAGAGGENADAIAGGAGVLGLIQQFQRVNQDGRGRTAVGL</sequence>
<dbReference type="EMBL" id="DS027060">
    <property type="protein sequence ID" value="EAW06864.1"/>
    <property type="molecule type" value="Genomic_DNA"/>
</dbReference>
<dbReference type="RefSeq" id="XP_001268290.1">
    <property type="nucleotide sequence ID" value="XM_001268289.1"/>
</dbReference>
<dbReference type="SMR" id="A1CU77"/>
<dbReference type="STRING" id="344612.A1CU77"/>
<dbReference type="EnsemblFungi" id="EAW06864">
    <property type="protein sequence ID" value="EAW06864"/>
    <property type="gene ID" value="ACLA_085600"/>
</dbReference>
<dbReference type="GeneID" id="4700445"/>
<dbReference type="KEGG" id="act:ACLA_085600"/>
<dbReference type="VEuPathDB" id="FungiDB:ACLA_085600"/>
<dbReference type="eggNOG" id="KOG2173">
    <property type="taxonomic scope" value="Eukaryota"/>
</dbReference>
<dbReference type="HOGENOM" id="CLU_006200_1_1_1"/>
<dbReference type="OMA" id="MMHYFFR"/>
<dbReference type="OrthoDB" id="2020634at2759"/>
<dbReference type="Proteomes" id="UP000006701">
    <property type="component" value="Unassembled WGS sequence"/>
</dbReference>
<dbReference type="GO" id="GO:0005776">
    <property type="term" value="C:autophagosome"/>
    <property type="evidence" value="ECO:0007669"/>
    <property type="project" value="TreeGrafter"/>
</dbReference>
<dbReference type="GO" id="GO:0030659">
    <property type="term" value="C:cytoplasmic vesicle membrane"/>
    <property type="evidence" value="ECO:0007669"/>
    <property type="project" value="UniProtKB-SubCell"/>
</dbReference>
<dbReference type="GO" id="GO:0005789">
    <property type="term" value="C:endoplasmic reticulum membrane"/>
    <property type="evidence" value="ECO:0007669"/>
    <property type="project" value="UniProtKB-SubCell"/>
</dbReference>
<dbReference type="GO" id="GO:0000139">
    <property type="term" value="C:Golgi membrane"/>
    <property type="evidence" value="ECO:0007669"/>
    <property type="project" value="UniProtKB-SubCell"/>
</dbReference>
<dbReference type="GO" id="GO:0005739">
    <property type="term" value="C:mitochondrion"/>
    <property type="evidence" value="ECO:0007669"/>
    <property type="project" value="EnsemblFungi"/>
</dbReference>
<dbReference type="GO" id="GO:0061908">
    <property type="term" value="C:phagophore"/>
    <property type="evidence" value="ECO:0007669"/>
    <property type="project" value="EnsemblFungi"/>
</dbReference>
<dbReference type="GO" id="GO:0034045">
    <property type="term" value="C:phagophore assembly site membrane"/>
    <property type="evidence" value="ECO:0007669"/>
    <property type="project" value="UniProtKB-SubCell"/>
</dbReference>
<dbReference type="GO" id="GO:0017128">
    <property type="term" value="F:phospholipid scramblase activity"/>
    <property type="evidence" value="ECO:0007669"/>
    <property type="project" value="EnsemblFungi"/>
</dbReference>
<dbReference type="GO" id="GO:0000423">
    <property type="term" value="P:mitophagy"/>
    <property type="evidence" value="ECO:0007669"/>
    <property type="project" value="EnsemblFungi"/>
</dbReference>
<dbReference type="GO" id="GO:0034727">
    <property type="term" value="P:piecemeal microautophagy of the nucleus"/>
    <property type="evidence" value="ECO:0007669"/>
    <property type="project" value="EnsemblFungi"/>
</dbReference>
<dbReference type="GO" id="GO:0034497">
    <property type="term" value="P:protein localization to phagophore assembly site"/>
    <property type="evidence" value="ECO:0007669"/>
    <property type="project" value="EnsemblFungi"/>
</dbReference>
<dbReference type="GO" id="GO:0061709">
    <property type="term" value="P:reticulophagy"/>
    <property type="evidence" value="ECO:0007669"/>
    <property type="project" value="EnsemblFungi"/>
</dbReference>
<dbReference type="InterPro" id="IPR007241">
    <property type="entry name" value="Autophagy-rel_prot_9"/>
</dbReference>
<dbReference type="PANTHER" id="PTHR13038">
    <property type="entry name" value="APG9 AUTOPHAGY 9"/>
    <property type="match status" value="1"/>
</dbReference>
<dbReference type="PANTHER" id="PTHR13038:SF10">
    <property type="entry name" value="AUTOPHAGY-RELATED PROTEIN 9"/>
    <property type="match status" value="1"/>
</dbReference>
<dbReference type="Pfam" id="PF04109">
    <property type="entry name" value="ATG9"/>
    <property type="match status" value="1"/>
</dbReference>
<name>ATG9_ASPCL</name>